<name>RL28_ECOSM</name>
<gene>
    <name evidence="1" type="primary">rpmB</name>
    <name type="ordered locus">EcSMS35_3972</name>
</gene>
<protein>
    <recommendedName>
        <fullName evidence="1">Large ribosomal subunit protein bL28</fullName>
    </recommendedName>
    <alternativeName>
        <fullName evidence="2">50S ribosomal protein L28</fullName>
    </alternativeName>
</protein>
<evidence type="ECO:0000255" key="1">
    <source>
        <dbReference type="HAMAP-Rule" id="MF_00373"/>
    </source>
</evidence>
<evidence type="ECO:0000305" key="2"/>
<proteinExistence type="inferred from homology"/>
<accession>B1LK74</accession>
<dbReference type="EMBL" id="CP000970">
    <property type="protein sequence ID" value="ACB16511.1"/>
    <property type="molecule type" value="Genomic_DNA"/>
</dbReference>
<dbReference type="RefSeq" id="WP_000091955.1">
    <property type="nucleotide sequence ID" value="NC_010498.1"/>
</dbReference>
<dbReference type="SMR" id="B1LK74"/>
<dbReference type="GeneID" id="93778350"/>
<dbReference type="KEGG" id="ecm:EcSMS35_3972"/>
<dbReference type="HOGENOM" id="CLU_064548_3_1_6"/>
<dbReference type="Proteomes" id="UP000007011">
    <property type="component" value="Chromosome"/>
</dbReference>
<dbReference type="GO" id="GO:0022625">
    <property type="term" value="C:cytosolic large ribosomal subunit"/>
    <property type="evidence" value="ECO:0007669"/>
    <property type="project" value="TreeGrafter"/>
</dbReference>
<dbReference type="GO" id="GO:0003735">
    <property type="term" value="F:structural constituent of ribosome"/>
    <property type="evidence" value="ECO:0007669"/>
    <property type="project" value="InterPro"/>
</dbReference>
<dbReference type="GO" id="GO:0006412">
    <property type="term" value="P:translation"/>
    <property type="evidence" value="ECO:0007669"/>
    <property type="project" value="UniProtKB-UniRule"/>
</dbReference>
<dbReference type="FunFam" id="2.30.170.40:FF:000001">
    <property type="entry name" value="50S ribosomal protein L28"/>
    <property type="match status" value="1"/>
</dbReference>
<dbReference type="Gene3D" id="2.30.170.40">
    <property type="entry name" value="Ribosomal protein L28/L24"/>
    <property type="match status" value="1"/>
</dbReference>
<dbReference type="HAMAP" id="MF_00373">
    <property type="entry name" value="Ribosomal_bL28"/>
    <property type="match status" value="1"/>
</dbReference>
<dbReference type="InterPro" id="IPR026569">
    <property type="entry name" value="Ribosomal_bL28"/>
</dbReference>
<dbReference type="InterPro" id="IPR034704">
    <property type="entry name" value="Ribosomal_bL28/bL31-like_sf"/>
</dbReference>
<dbReference type="InterPro" id="IPR001383">
    <property type="entry name" value="Ribosomal_bL28_bact-type"/>
</dbReference>
<dbReference type="InterPro" id="IPR037147">
    <property type="entry name" value="Ribosomal_bL28_sf"/>
</dbReference>
<dbReference type="NCBIfam" id="TIGR00009">
    <property type="entry name" value="L28"/>
    <property type="match status" value="1"/>
</dbReference>
<dbReference type="PANTHER" id="PTHR13528">
    <property type="entry name" value="39S RIBOSOMAL PROTEIN L28, MITOCHONDRIAL"/>
    <property type="match status" value="1"/>
</dbReference>
<dbReference type="PANTHER" id="PTHR13528:SF2">
    <property type="entry name" value="LARGE RIBOSOMAL SUBUNIT PROTEIN BL28M"/>
    <property type="match status" value="1"/>
</dbReference>
<dbReference type="Pfam" id="PF00830">
    <property type="entry name" value="Ribosomal_L28"/>
    <property type="match status" value="1"/>
</dbReference>
<dbReference type="SUPFAM" id="SSF143800">
    <property type="entry name" value="L28p-like"/>
    <property type="match status" value="1"/>
</dbReference>
<feature type="chain" id="PRO_1000121632" description="Large ribosomal subunit protein bL28">
    <location>
        <begin position="1"/>
        <end position="78"/>
    </location>
</feature>
<sequence length="78" mass="9006">MSRVCQVTGKRPVTGNNRSHALNATKRRFLPNLHSHRFWVESEKRFVTLRVSAKGMRVIDKKGIDTVLAELRARGEKY</sequence>
<comment type="similarity">
    <text evidence="1">Belongs to the bacterial ribosomal protein bL28 family.</text>
</comment>
<reference key="1">
    <citation type="journal article" date="2008" name="J. Bacteriol.">
        <title>Insights into the environmental resistance gene pool from the genome sequence of the multidrug-resistant environmental isolate Escherichia coli SMS-3-5.</title>
        <authorList>
            <person name="Fricke W.F."/>
            <person name="Wright M.S."/>
            <person name="Lindell A.H."/>
            <person name="Harkins D.M."/>
            <person name="Baker-Austin C."/>
            <person name="Ravel J."/>
            <person name="Stepanauskas R."/>
        </authorList>
    </citation>
    <scope>NUCLEOTIDE SEQUENCE [LARGE SCALE GENOMIC DNA]</scope>
    <source>
        <strain>SMS-3-5 / SECEC</strain>
    </source>
</reference>
<organism>
    <name type="scientific">Escherichia coli (strain SMS-3-5 / SECEC)</name>
    <dbReference type="NCBI Taxonomy" id="439855"/>
    <lineage>
        <taxon>Bacteria</taxon>
        <taxon>Pseudomonadati</taxon>
        <taxon>Pseudomonadota</taxon>
        <taxon>Gammaproteobacteria</taxon>
        <taxon>Enterobacterales</taxon>
        <taxon>Enterobacteriaceae</taxon>
        <taxon>Escherichia</taxon>
    </lineage>
</organism>
<keyword id="KW-0687">Ribonucleoprotein</keyword>
<keyword id="KW-0689">Ribosomal protein</keyword>